<accession>Q62383</accession>
<accession>Q5SYM0</accession>
<accession>Q6GQS3</accession>
<accession>Q6ZQI0</accession>
<accession>Q8BQY6</accession>
<reference key="1">
    <citation type="journal article" date="1996" name="Genomics">
        <title>Identification and analysis of the human and murine putative chromatin structure regulator SUPT6H and Supt6h.</title>
        <authorList>
            <person name="Chiang P.-W."/>
            <person name="Wang S."/>
            <person name="Smithivas P."/>
            <person name="Song W.-J."/>
            <person name="Ramamoorthy S."/>
            <person name="Hillman J."/>
            <person name="Puett S."/>
            <person name="Van Keuren M.L."/>
            <person name="Crombez E."/>
            <person name="Kumar A."/>
            <person name="Glover T.W."/>
            <person name="Miller D.E."/>
            <person name="Tsai C.-H."/>
            <person name="Blackburn C.C."/>
            <person name="Chen X.-N."/>
            <person name="Sun Z."/>
            <person name="Cheng J.-F."/>
            <person name="Korenberg J.R."/>
            <person name="Kurnit D.M."/>
        </authorList>
    </citation>
    <scope>NUCLEOTIDE SEQUENCE [MRNA]</scope>
    <source>
        <strain>Swiss Webster</strain>
    </source>
</reference>
<reference key="2">
    <citation type="journal article" date="2009" name="PLoS Biol.">
        <title>Lineage-specific biology revealed by a finished genome assembly of the mouse.</title>
        <authorList>
            <person name="Church D.M."/>
            <person name="Goodstadt L."/>
            <person name="Hillier L.W."/>
            <person name="Zody M.C."/>
            <person name="Goldstein S."/>
            <person name="She X."/>
            <person name="Bult C.J."/>
            <person name="Agarwala R."/>
            <person name="Cherry J.L."/>
            <person name="DiCuccio M."/>
            <person name="Hlavina W."/>
            <person name="Kapustin Y."/>
            <person name="Meric P."/>
            <person name="Maglott D."/>
            <person name="Birtle Z."/>
            <person name="Marques A.C."/>
            <person name="Graves T."/>
            <person name="Zhou S."/>
            <person name="Teague B."/>
            <person name="Potamousis K."/>
            <person name="Churas C."/>
            <person name="Place M."/>
            <person name="Herschleb J."/>
            <person name="Runnheim R."/>
            <person name="Forrest D."/>
            <person name="Amos-Landgraf J."/>
            <person name="Schwartz D.C."/>
            <person name="Cheng Z."/>
            <person name="Lindblad-Toh K."/>
            <person name="Eichler E.E."/>
            <person name="Ponting C.P."/>
        </authorList>
    </citation>
    <scope>NUCLEOTIDE SEQUENCE [LARGE SCALE GENOMIC DNA]</scope>
    <source>
        <strain>C57BL/6J</strain>
    </source>
</reference>
<reference key="3">
    <citation type="journal article" date="2004" name="Genome Res.">
        <title>The status, quality, and expansion of the NIH full-length cDNA project: the Mammalian Gene Collection (MGC).</title>
        <authorList>
            <consortium name="The MGC Project Team"/>
        </authorList>
    </citation>
    <scope>NUCLEOTIDE SEQUENCE [LARGE SCALE MRNA]</scope>
    <source>
        <strain>C57BL/6J</strain>
        <tissue>Brain</tissue>
    </source>
</reference>
<reference key="4">
    <citation type="journal article" date="2003" name="DNA Res.">
        <title>Prediction of the coding sequences of mouse homologues of KIAA gene: III. The complete nucleotide sequences of 500 mouse KIAA-homologous cDNAs identified by screening of terminal sequences of cDNA clones randomly sampled from size-fractionated libraries.</title>
        <authorList>
            <person name="Okazaki N."/>
            <person name="Kikuno R."/>
            <person name="Ohara R."/>
            <person name="Inamoto S."/>
            <person name="Koseki H."/>
            <person name="Hiraoka S."/>
            <person name="Saga Y."/>
            <person name="Nagase T."/>
            <person name="Ohara O."/>
            <person name="Koga H."/>
        </authorList>
    </citation>
    <scope>NUCLEOTIDE SEQUENCE [LARGE SCALE MRNA] OF 498-1726</scope>
    <source>
        <tissue>Brain</tissue>
    </source>
</reference>
<reference key="5">
    <citation type="journal article" date="2005" name="Science">
        <title>The transcriptional landscape of the mammalian genome.</title>
        <authorList>
            <person name="Carninci P."/>
            <person name="Kasukawa T."/>
            <person name="Katayama S."/>
            <person name="Gough J."/>
            <person name="Frith M.C."/>
            <person name="Maeda N."/>
            <person name="Oyama R."/>
            <person name="Ravasi T."/>
            <person name="Lenhard B."/>
            <person name="Wells C."/>
            <person name="Kodzius R."/>
            <person name="Shimokawa K."/>
            <person name="Bajic V.B."/>
            <person name="Brenner S.E."/>
            <person name="Batalov S."/>
            <person name="Forrest A.R."/>
            <person name="Zavolan M."/>
            <person name="Davis M.J."/>
            <person name="Wilming L.G."/>
            <person name="Aidinis V."/>
            <person name="Allen J.E."/>
            <person name="Ambesi-Impiombato A."/>
            <person name="Apweiler R."/>
            <person name="Aturaliya R.N."/>
            <person name="Bailey T.L."/>
            <person name="Bansal M."/>
            <person name="Baxter L."/>
            <person name="Beisel K.W."/>
            <person name="Bersano T."/>
            <person name="Bono H."/>
            <person name="Chalk A.M."/>
            <person name="Chiu K.P."/>
            <person name="Choudhary V."/>
            <person name="Christoffels A."/>
            <person name="Clutterbuck D.R."/>
            <person name="Crowe M.L."/>
            <person name="Dalla E."/>
            <person name="Dalrymple B.P."/>
            <person name="de Bono B."/>
            <person name="Della Gatta G."/>
            <person name="di Bernardo D."/>
            <person name="Down T."/>
            <person name="Engstrom P."/>
            <person name="Fagiolini M."/>
            <person name="Faulkner G."/>
            <person name="Fletcher C.F."/>
            <person name="Fukushima T."/>
            <person name="Furuno M."/>
            <person name="Futaki S."/>
            <person name="Gariboldi M."/>
            <person name="Georgii-Hemming P."/>
            <person name="Gingeras T.R."/>
            <person name="Gojobori T."/>
            <person name="Green R.E."/>
            <person name="Gustincich S."/>
            <person name="Harbers M."/>
            <person name="Hayashi Y."/>
            <person name="Hensch T.K."/>
            <person name="Hirokawa N."/>
            <person name="Hill D."/>
            <person name="Huminiecki L."/>
            <person name="Iacono M."/>
            <person name="Ikeo K."/>
            <person name="Iwama A."/>
            <person name="Ishikawa T."/>
            <person name="Jakt M."/>
            <person name="Kanapin A."/>
            <person name="Katoh M."/>
            <person name="Kawasawa Y."/>
            <person name="Kelso J."/>
            <person name="Kitamura H."/>
            <person name="Kitano H."/>
            <person name="Kollias G."/>
            <person name="Krishnan S.P."/>
            <person name="Kruger A."/>
            <person name="Kummerfeld S.K."/>
            <person name="Kurochkin I.V."/>
            <person name="Lareau L.F."/>
            <person name="Lazarevic D."/>
            <person name="Lipovich L."/>
            <person name="Liu J."/>
            <person name="Liuni S."/>
            <person name="McWilliam S."/>
            <person name="Madan Babu M."/>
            <person name="Madera M."/>
            <person name="Marchionni L."/>
            <person name="Matsuda H."/>
            <person name="Matsuzawa S."/>
            <person name="Miki H."/>
            <person name="Mignone F."/>
            <person name="Miyake S."/>
            <person name="Morris K."/>
            <person name="Mottagui-Tabar S."/>
            <person name="Mulder N."/>
            <person name="Nakano N."/>
            <person name="Nakauchi H."/>
            <person name="Ng P."/>
            <person name="Nilsson R."/>
            <person name="Nishiguchi S."/>
            <person name="Nishikawa S."/>
            <person name="Nori F."/>
            <person name="Ohara O."/>
            <person name="Okazaki Y."/>
            <person name="Orlando V."/>
            <person name="Pang K.C."/>
            <person name="Pavan W.J."/>
            <person name="Pavesi G."/>
            <person name="Pesole G."/>
            <person name="Petrovsky N."/>
            <person name="Piazza S."/>
            <person name="Reed J."/>
            <person name="Reid J.F."/>
            <person name="Ring B.Z."/>
            <person name="Ringwald M."/>
            <person name="Rost B."/>
            <person name="Ruan Y."/>
            <person name="Salzberg S.L."/>
            <person name="Sandelin A."/>
            <person name="Schneider C."/>
            <person name="Schoenbach C."/>
            <person name="Sekiguchi K."/>
            <person name="Semple C.A."/>
            <person name="Seno S."/>
            <person name="Sessa L."/>
            <person name="Sheng Y."/>
            <person name="Shibata Y."/>
            <person name="Shimada H."/>
            <person name="Shimada K."/>
            <person name="Silva D."/>
            <person name="Sinclair B."/>
            <person name="Sperling S."/>
            <person name="Stupka E."/>
            <person name="Sugiura K."/>
            <person name="Sultana R."/>
            <person name="Takenaka Y."/>
            <person name="Taki K."/>
            <person name="Tammoja K."/>
            <person name="Tan S.L."/>
            <person name="Tang S."/>
            <person name="Taylor M.S."/>
            <person name="Tegner J."/>
            <person name="Teichmann S.A."/>
            <person name="Ueda H.R."/>
            <person name="van Nimwegen E."/>
            <person name="Verardo R."/>
            <person name="Wei C.L."/>
            <person name="Yagi K."/>
            <person name="Yamanishi H."/>
            <person name="Zabarovsky E."/>
            <person name="Zhu S."/>
            <person name="Zimmer A."/>
            <person name="Hide W."/>
            <person name="Bult C."/>
            <person name="Grimmond S.M."/>
            <person name="Teasdale R.D."/>
            <person name="Liu E.T."/>
            <person name="Brusic V."/>
            <person name="Quackenbush J."/>
            <person name="Wahlestedt C."/>
            <person name="Mattick J.S."/>
            <person name="Hume D.A."/>
            <person name="Kai C."/>
            <person name="Sasaki D."/>
            <person name="Tomaru Y."/>
            <person name="Fukuda S."/>
            <person name="Kanamori-Katayama M."/>
            <person name="Suzuki M."/>
            <person name="Aoki J."/>
            <person name="Arakawa T."/>
            <person name="Iida J."/>
            <person name="Imamura K."/>
            <person name="Itoh M."/>
            <person name="Kato T."/>
            <person name="Kawaji H."/>
            <person name="Kawagashira N."/>
            <person name="Kawashima T."/>
            <person name="Kojima M."/>
            <person name="Kondo S."/>
            <person name="Konno H."/>
            <person name="Nakano K."/>
            <person name="Ninomiya N."/>
            <person name="Nishio T."/>
            <person name="Okada M."/>
            <person name="Plessy C."/>
            <person name="Shibata K."/>
            <person name="Shiraki T."/>
            <person name="Suzuki S."/>
            <person name="Tagami M."/>
            <person name="Waki K."/>
            <person name="Watahiki A."/>
            <person name="Okamura-Oho Y."/>
            <person name="Suzuki H."/>
            <person name="Kawai J."/>
            <person name="Hayashizaki Y."/>
        </authorList>
    </citation>
    <scope>NUCLEOTIDE SEQUENCE [LARGE SCALE MRNA] OF 1359-1726</scope>
    <source>
        <strain>C57BL/6J</strain>
        <tissue>Corpora quadrigemina</tissue>
    </source>
</reference>
<reference key="6">
    <citation type="journal article" date="2007" name="Genes Dev.">
        <title>The Spt6 SH2 domain binds Ser2-P RNAPII to direct Iws1-dependent mRNA splicing and export.</title>
        <authorList>
            <person name="Yoh S.M."/>
            <person name="Cho H."/>
            <person name="Pickle L."/>
            <person name="Evans R.M."/>
            <person name="Jones K.A."/>
        </authorList>
    </citation>
    <scope>FUNCTION</scope>
    <scope>INTERACTION WITH POLR2A AND IWS1</scope>
    <scope>MUTAGENESIS OF ARG-1358</scope>
</reference>
<reference key="7">
    <citation type="journal article" date="2008" name="Genes Dev.">
        <title>The Iws1:Spt6:CTD complex controls cotranscriptional mRNA biosynthesis and HYPB/Setd2-mediated histone H3K36 methylation.</title>
        <authorList>
            <person name="Yoh S.M."/>
            <person name="Lucas J.S."/>
            <person name="Jones K.A."/>
        </authorList>
    </citation>
    <scope>INTERACTION WITH IWS1 AND POLR2A</scope>
</reference>
<reference key="8">
    <citation type="journal article" date="2010" name="Cell">
        <title>A tissue-specific atlas of mouse protein phosphorylation and expression.</title>
        <authorList>
            <person name="Huttlin E.L."/>
            <person name="Jedrychowski M.P."/>
            <person name="Elias J.E."/>
            <person name="Goswami T."/>
            <person name="Rad R."/>
            <person name="Beausoleil S.A."/>
            <person name="Villen J."/>
            <person name="Haas W."/>
            <person name="Sowa M.E."/>
            <person name="Gygi S.P."/>
        </authorList>
    </citation>
    <scope>PHOSPHORYLATION [LARGE SCALE ANALYSIS] AT SER-73; SER-78; SER-91; SER-125; THR-1532; SER-1535; THR-1539; SER-1701; SER-1703; THR-1709 AND THR-1718</scope>
    <scope>IDENTIFICATION BY MASS SPECTROMETRY [LARGE SCALE ANALYSIS]</scope>
    <source>
        <tissue>Brain</tissue>
        <tissue>Brown adipose tissue</tissue>
        <tissue>Heart</tissue>
        <tissue>Kidney</tissue>
        <tissue>Liver</tissue>
        <tissue>Lung</tissue>
        <tissue>Pancreas</tissue>
        <tissue>Spleen</tissue>
        <tissue>Testis</tissue>
    </source>
</reference>
<reference key="9">
    <citation type="journal article" date="2011" name="Proc. Natl. Acad. Sci. U.S.A.">
        <title>Histone chaperone Spt6 is required for class switch recombination but not somatic hypermutation.</title>
        <authorList>
            <person name="Okazaki I.M."/>
            <person name="Okawa K."/>
            <person name="Kobayashi M."/>
            <person name="Yoshikawa K."/>
            <person name="Kawamoto S."/>
            <person name="Nagaoka H."/>
            <person name="Shinkura R."/>
            <person name="Kitawaki Y."/>
            <person name="Taniguchi H."/>
            <person name="Natsume T."/>
            <person name="Iemura S."/>
            <person name="Honjo T."/>
        </authorList>
    </citation>
    <scope>FUNCTION</scope>
    <scope>INTERACTION WITH AICDA</scope>
</reference>
<reference key="10">
    <citation type="journal article" date="2012" name="J. Biol. Chem.">
        <title>The histone chaperone Spt6 is required for activation-induced cytidine deaminase target determination through H3K4me3 regulation.</title>
        <authorList>
            <person name="Begum N.A."/>
            <person name="Stanlie A."/>
            <person name="Nakata M."/>
            <person name="Akiyama H."/>
            <person name="Honjo T."/>
        </authorList>
    </citation>
    <scope>FUNCTION</scope>
    <scope>INTERACTION WITH SETD1A</scope>
</reference>
<reference key="11">
    <citation type="journal article" date="2013" name="EMBO J.">
        <title>The histone chaperone Spt6 coordinates histone H3K27 demethylation and myogenesis.</title>
        <authorList>
            <person name="Wang A.H."/>
            <person name="Zare H."/>
            <person name="Mousavi K."/>
            <person name="Wang C."/>
            <person name="Moravec C.E."/>
            <person name="Sirotkin H.I."/>
            <person name="Ge K."/>
            <person name="Gutierrez-Cruz G."/>
            <person name="Sartorelli V."/>
        </authorList>
    </citation>
    <scope>FUNCTION</scope>
    <scope>INTERACTION WITH KDM6A</scope>
</reference>
<reference key="12">
    <citation type="journal article" date="2019" name="Mol. Cell">
        <title>RNA Targets Ribogenesis Factor WDR43 to Chromatin for Transcription and Pluripotency Control.</title>
        <authorList>
            <person name="Bi X."/>
            <person name="Xu Y."/>
            <person name="Li T."/>
            <person name="Li X."/>
            <person name="Li W."/>
            <person name="Shao W."/>
            <person name="Wang K."/>
            <person name="Zhan G."/>
            <person name="Wu Z."/>
            <person name="Liu W."/>
            <person name="Lu J.Y."/>
            <person name="Wang L."/>
            <person name="Zhao J."/>
            <person name="Wu J."/>
            <person name="Na J."/>
            <person name="Li G."/>
            <person name="Li P."/>
            <person name="Shen X."/>
        </authorList>
    </citation>
    <scope>INTERACTION WITH WDR43</scope>
</reference>
<evidence type="ECO:0000250" key="1"/>
<evidence type="ECO:0000250" key="2">
    <source>
        <dbReference type="UniProtKB" id="Q7KZ85"/>
    </source>
</evidence>
<evidence type="ECO:0000255" key="3"/>
<evidence type="ECO:0000255" key="4">
    <source>
        <dbReference type="PROSITE-ProRule" id="PRU00180"/>
    </source>
</evidence>
<evidence type="ECO:0000255" key="5">
    <source>
        <dbReference type="PROSITE-ProRule" id="PRU00191"/>
    </source>
</evidence>
<evidence type="ECO:0000256" key="6">
    <source>
        <dbReference type="SAM" id="MobiDB-lite"/>
    </source>
</evidence>
<evidence type="ECO:0000269" key="7">
    <source>
    </source>
</evidence>
<evidence type="ECO:0000269" key="8">
    <source>
    </source>
</evidence>
<evidence type="ECO:0000269" key="9">
    <source>
    </source>
</evidence>
<evidence type="ECO:0000269" key="10">
    <source>
    </source>
</evidence>
<evidence type="ECO:0000269" key="11">
    <source>
    </source>
</evidence>
<evidence type="ECO:0000269" key="12">
    <source>
    </source>
</evidence>
<evidence type="ECO:0000305" key="13"/>
<evidence type="ECO:0007744" key="14">
    <source>
    </source>
</evidence>
<proteinExistence type="evidence at protein level"/>
<gene>
    <name type="primary">Supt6h</name>
    <name type="synonym">Kiaa0162</name>
    <name type="synonym">Supt6</name>
</gene>
<organism>
    <name type="scientific">Mus musculus</name>
    <name type="common">Mouse</name>
    <dbReference type="NCBI Taxonomy" id="10090"/>
    <lineage>
        <taxon>Eukaryota</taxon>
        <taxon>Metazoa</taxon>
        <taxon>Chordata</taxon>
        <taxon>Craniata</taxon>
        <taxon>Vertebrata</taxon>
        <taxon>Euteleostomi</taxon>
        <taxon>Mammalia</taxon>
        <taxon>Eutheria</taxon>
        <taxon>Euarchontoglires</taxon>
        <taxon>Glires</taxon>
        <taxon>Rodentia</taxon>
        <taxon>Myomorpha</taxon>
        <taxon>Muroidea</taxon>
        <taxon>Muridae</taxon>
        <taxon>Murinae</taxon>
        <taxon>Mus</taxon>
        <taxon>Mus</taxon>
    </lineage>
</organism>
<dbReference type="EMBL" id="U40375">
    <property type="protein sequence ID" value="AAB18950.1"/>
    <property type="molecule type" value="mRNA"/>
</dbReference>
<dbReference type="EMBL" id="AL591070">
    <property type="status" value="NOT_ANNOTATED_CDS"/>
    <property type="molecule type" value="Genomic_DNA"/>
</dbReference>
<dbReference type="EMBL" id="BC072657">
    <property type="protein sequence ID" value="AAH72657.1"/>
    <property type="molecule type" value="mRNA"/>
</dbReference>
<dbReference type="EMBL" id="AK129069">
    <property type="protein sequence ID" value="BAC97879.1"/>
    <property type="molecule type" value="mRNA"/>
</dbReference>
<dbReference type="EMBL" id="AK046156">
    <property type="protein sequence ID" value="BAC32616.1"/>
    <property type="molecule type" value="mRNA"/>
</dbReference>
<dbReference type="CCDS" id="CCDS25095.1"/>
<dbReference type="PIR" id="T30810">
    <property type="entry name" value="T30810"/>
</dbReference>
<dbReference type="RefSeq" id="NP_033323.2">
    <property type="nucleotide sequence ID" value="NM_009297.2"/>
</dbReference>
<dbReference type="SMR" id="Q62383"/>
<dbReference type="BioGRID" id="203576">
    <property type="interactions" value="9"/>
</dbReference>
<dbReference type="FunCoup" id="Q62383">
    <property type="interactions" value="3791"/>
</dbReference>
<dbReference type="IntAct" id="Q62383">
    <property type="interactions" value="5"/>
</dbReference>
<dbReference type="MINT" id="Q62383"/>
<dbReference type="STRING" id="10090.ENSMUSP00000002121"/>
<dbReference type="GlyGen" id="Q62383">
    <property type="glycosylation" value="7 sites, 1 N-linked glycan (1 site), 1 O-linked glycan (3 sites)"/>
</dbReference>
<dbReference type="iPTMnet" id="Q62383"/>
<dbReference type="PhosphoSitePlus" id="Q62383"/>
<dbReference type="SwissPalm" id="Q62383"/>
<dbReference type="jPOST" id="Q62383"/>
<dbReference type="PaxDb" id="10090-ENSMUSP00000002121"/>
<dbReference type="PeptideAtlas" id="Q62383"/>
<dbReference type="ProteomicsDB" id="261636"/>
<dbReference type="Pumba" id="Q62383"/>
<dbReference type="Antibodypedia" id="3242">
    <property type="antibodies" value="167 antibodies from 24 providers"/>
</dbReference>
<dbReference type="DNASU" id="20926"/>
<dbReference type="Ensembl" id="ENSMUST00000002121.5">
    <property type="protein sequence ID" value="ENSMUSP00000002121.5"/>
    <property type="gene ID" value="ENSMUSG00000002052.7"/>
</dbReference>
<dbReference type="GeneID" id="20926"/>
<dbReference type="KEGG" id="mmu:20926"/>
<dbReference type="UCSC" id="uc007kip.2">
    <property type="organism name" value="mouse"/>
</dbReference>
<dbReference type="AGR" id="MGI:107726"/>
<dbReference type="CTD" id="20926"/>
<dbReference type="MGI" id="MGI:107726">
    <property type="gene designation" value="Supt6"/>
</dbReference>
<dbReference type="VEuPathDB" id="HostDB:ENSMUSG00000002052"/>
<dbReference type="eggNOG" id="KOG1856">
    <property type="taxonomic scope" value="Eukaryota"/>
</dbReference>
<dbReference type="GeneTree" id="ENSGT00510000047446"/>
<dbReference type="HOGENOM" id="CLU_001680_4_0_1"/>
<dbReference type="InParanoid" id="Q62383"/>
<dbReference type="OMA" id="GYFYLCF"/>
<dbReference type="OrthoDB" id="343921at2759"/>
<dbReference type="PhylomeDB" id="Q62383"/>
<dbReference type="TreeFam" id="TF105956"/>
<dbReference type="Reactome" id="R-MMU-112382">
    <property type="pathway name" value="Formation of RNA Pol II elongation complex"/>
</dbReference>
<dbReference type="Reactome" id="R-MMU-674695">
    <property type="pathway name" value="RNA Polymerase II Pre-transcription Events"/>
</dbReference>
<dbReference type="Reactome" id="R-MMU-75955">
    <property type="pathway name" value="RNA Polymerase II Transcription Elongation"/>
</dbReference>
<dbReference type="BioGRID-ORCS" id="20926">
    <property type="hits" value="46 hits in 119 CRISPR screens"/>
</dbReference>
<dbReference type="ChiTaRS" id="Supt6">
    <property type="organism name" value="mouse"/>
</dbReference>
<dbReference type="PRO" id="PR:Q62383"/>
<dbReference type="Proteomes" id="UP000000589">
    <property type="component" value="Chromosome 11"/>
</dbReference>
<dbReference type="RNAct" id="Q62383">
    <property type="molecule type" value="protein"/>
</dbReference>
<dbReference type="Bgee" id="ENSMUSG00000002052">
    <property type="expression patterns" value="Expressed in floor plate of midbrain and 278 other cell types or tissues"/>
</dbReference>
<dbReference type="GO" id="GO:0005634">
    <property type="term" value="C:nucleus"/>
    <property type="evidence" value="ECO:0007669"/>
    <property type="project" value="UniProtKB-SubCell"/>
</dbReference>
<dbReference type="GO" id="GO:0003677">
    <property type="term" value="F:DNA binding"/>
    <property type="evidence" value="ECO:0007669"/>
    <property type="project" value="InterPro"/>
</dbReference>
<dbReference type="GO" id="GO:0042393">
    <property type="term" value="F:histone binding"/>
    <property type="evidence" value="ECO:0000250"/>
    <property type="project" value="UniProtKB"/>
</dbReference>
<dbReference type="GO" id="GO:0001825">
    <property type="term" value="P:blastocyst formation"/>
    <property type="evidence" value="ECO:0000315"/>
    <property type="project" value="MGI"/>
</dbReference>
<dbReference type="GO" id="GO:0006397">
    <property type="term" value="P:mRNA processing"/>
    <property type="evidence" value="ECO:0007669"/>
    <property type="project" value="UniProtKB-KW"/>
</dbReference>
<dbReference type="GO" id="GO:0051028">
    <property type="term" value="P:mRNA transport"/>
    <property type="evidence" value="ECO:0007669"/>
    <property type="project" value="UniProtKB-KW"/>
</dbReference>
<dbReference type="GO" id="GO:0045191">
    <property type="term" value="P:regulation of isotype switching"/>
    <property type="evidence" value="ECO:0000315"/>
    <property type="project" value="UniProtKB"/>
</dbReference>
<dbReference type="GO" id="GO:0051147">
    <property type="term" value="P:regulation of muscle cell differentiation"/>
    <property type="evidence" value="ECO:0000315"/>
    <property type="project" value="UniProtKB"/>
</dbReference>
<dbReference type="GO" id="GO:0008380">
    <property type="term" value="P:RNA splicing"/>
    <property type="evidence" value="ECO:0007669"/>
    <property type="project" value="UniProtKB-KW"/>
</dbReference>
<dbReference type="GO" id="GO:0006368">
    <property type="term" value="P:transcription elongation by RNA polymerase II"/>
    <property type="evidence" value="ECO:0000315"/>
    <property type="project" value="UniProtKB"/>
</dbReference>
<dbReference type="GO" id="GO:0140673">
    <property type="term" value="P:transcription elongation-coupled chromatin remodeling"/>
    <property type="evidence" value="ECO:0000315"/>
    <property type="project" value="UniProtKB"/>
</dbReference>
<dbReference type="CDD" id="cd00164">
    <property type="entry name" value="S1_like"/>
    <property type="match status" value="1"/>
</dbReference>
<dbReference type="CDD" id="cd09928">
    <property type="entry name" value="SH2_Cterm_SPT6_like"/>
    <property type="match status" value="1"/>
</dbReference>
<dbReference type="CDD" id="cd09918">
    <property type="entry name" value="SH2_Nterm_SPT6_like"/>
    <property type="match status" value="1"/>
</dbReference>
<dbReference type="FunFam" id="2.40.50.140:FF:000494">
    <property type="entry name" value="Suppressor of Ty 6 homolog"/>
    <property type="match status" value="1"/>
</dbReference>
<dbReference type="FunFam" id="1.10.10.2740:FF:000001">
    <property type="entry name" value="Transcription elongation factor spt6"/>
    <property type="match status" value="1"/>
</dbReference>
<dbReference type="FunFam" id="1.10.10.650:FF:000002">
    <property type="entry name" value="Transcription elongation factor spt6"/>
    <property type="match status" value="1"/>
</dbReference>
<dbReference type="FunFam" id="1.10.150.850:FF:000002">
    <property type="entry name" value="Transcription elongation factor spt6"/>
    <property type="match status" value="1"/>
</dbReference>
<dbReference type="FunFam" id="1.10.3500.10:FF:000001">
    <property type="entry name" value="Transcription elongation factor spt6"/>
    <property type="match status" value="1"/>
</dbReference>
<dbReference type="FunFam" id="3.30.420.140:FF:000004">
    <property type="entry name" value="Transcription elongation factor spt6"/>
    <property type="match status" value="1"/>
</dbReference>
<dbReference type="FunFam" id="3.30.505.10:FF:000030">
    <property type="entry name" value="Transcription elongation factor spt6"/>
    <property type="match status" value="1"/>
</dbReference>
<dbReference type="FunFam" id="3.30.505.10:FF:000032">
    <property type="entry name" value="Transcription elongation factor spt6"/>
    <property type="match status" value="1"/>
</dbReference>
<dbReference type="Gene3D" id="2.40.50.140">
    <property type="entry name" value="Nucleic acid-binding proteins"/>
    <property type="match status" value="1"/>
</dbReference>
<dbReference type="Gene3D" id="1.10.10.650">
    <property type="entry name" value="RuvA domain 2-like"/>
    <property type="match status" value="1"/>
</dbReference>
<dbReference type="Gene3D" id="3.30.505.10">
    <property type="entry name" value="SH2 domain"/>
    <property type="match status" value="2"/>
</dbReference>
<dbReference type="Gene3D" id="1.10.10.2740">
    <property type="entry name" value="Spt6, Death-like domain"/>
    <property type="match status" value="1"/>
</dbReference>
<dbReference type="Gene3D" id="1.10.150.850">
    <property type="entry name" value="Spt6, helix-hairpin-helix domain"/>
    <property type="match status" value="1"/>
</dbReference>
<dbReference type="Gene3D" id="1.10.3500.10">
    <property type="entry name" value="Tex N-terminal region-like"/>
    <property type="match status" value="1"/>
</dbReference>
<dbReference type="Gene3D" id="3.30.420.140">
    <property type="entry name" value="YqgF/RNase H-like domain"/>
    <property type="match status" value="1"/>
</dbReference>
<dbReference type="InterPro" id="IPR041692">
    <property type="entry name" value="HHH_9"/>
</dbReference>
<dbReference type="InterPro" id="IPR012340">
    <property type="entry name" value="NA-bd_OB-fold"/>
</dbReference>
<dbReference type="InterPro" id="IPR012337">
    <property type="entry name" value="RNaseH-like_sf"/>
</dbReference>
<dbReference type="InterPro" id="IPR010994">
    <property type="entry name" value="RuvA_2-like"/>
</dbReference>
<dbReference type="InterPro" id="IPR003029">
    <property type="entry name" value="S1_domain"/>
</dbReference>
<dbReference type="InterPro" id="IPR000980">
    <property type="entry name" value="SH2"/>
</dbReference>
<dbReference type="InterPro" id="IPR036860">
    <property type="entry name" value="SH2_dom_sf"/>
</dbReference>
<dbReference type="InterPro" id="IPR028083">
    <property type="entry name" value="Spt6_acidic_N_dom"/>
</dbReference>
<dbReference type="InterPro" id="IPR042066">
    <property type="entry name" value="Spt6_death-like"/>
</dbReference>
<dbReference type="InterPro" id="IPR032706">
    <property type="entry name" value="Spt6_HHH"/>
</dbReference>
<dbReference type="InterPro" id="IPR028088">
    <property type="entry name" value="Spt6_HTH_DNA-bd_dom"/>
</dbReference>
<dbReference type="InterPro" id="IPR035420">
    <property type="entry name" value="Spt6_SH2"/>
</dbReference>
<dbReference type="InterPro" id="IPR035018">
    <property type="entry name" value="Spt6_SH2_C"/>
</dbReference>
<dbReference type="InterPro" id="IPR035019">
    <property type="entry name" value="Spt6_SH2_N"/>
</dbReference>
<dbReference type="InterPro" id="IPR028231">
    <property type="entry name" value="Spt6_YqgF"/>
</dbReference>
<dbReference type="InterPro" id="IPR055179">
    <property type="entry name" value="Tex-like_central_region"/>
</dbReference>
<dbReference type="InterPro" id="IPR023323">
    <property type="entry name" value="Tex-like_dom_sf"/>
</dbReference>
<dbReference type="InterPro" id="IPR023319">
    <property type="entry name" value="Tex-like_HTH_dom_sf"/>
</dbReference>
<dbReference type="InterPro" id="IPR017072">
    <property type="entry name" value="TF_Spt6"/>
</dbReference>
<dbReference type="InterPro" id="IPR006641">
    <property type="entry name" value="YqgF/RNaseH-like_dom"/>
</dbReference>
<dbReference type="InterPro" id="IPR037027">
    <property type="entry name" value="YqgF/RNaseH-like_dom_sf"/>
</dbReference>
<dbReference type="PANTHER" id="PTHR10145">
    <property type="entry name" value="TRANSCRIPTION ELONGATION FACTOR SPT6"/>
    <property type="match status" value="1"/>
</dbReference>
<dbReference type="PANTHER" id="PTHR10145:SF6">
    <property type="entry name" value="TRANSCRIPTION ELONGATION FACTOR SPT6"/>
    <property type="match status" value="1"/>
</dbReference>
<dbReference type="Pfam" id="PF14635">
    <property type="entry name" value="HHH_7"/>
    <property type="match status" value="1"/>
</dbReference>
<dbReference type="Pfam" id="PF17674">
    <property type="entry name" value="HHH_9"/>
    <property type="match status" value="1"/>
</dbReference>
<dbReference type="Pfam" id="PF14641">
    <property type="entry name" value="HTH_44"/>
    <property type="match status" value="1"/>
</dbReference>
<dbReference type="Pfam" id="PF00575">
    <property type="entry name" value="S1"/>
    <property type="match status" value="1"/>
</dbReference>
<dbReference type="Pfam" id="PF14633">
    <property type="entry name" value="SH2_2"/>
    <property type="match status" value="1"/>
</dbReference>
<dbReference type="Pfam" id="PF14632">
    <property type="entry name" value="SPT6_acidic"/>
    <property type="match status" value="1"/>
</dbReference>
<dbReference type="Pfam" id="PF22706">
    <property type="entry name" value="Tex_central_region"/>
    <property type="match status" value="1"/>
</dbReference>
<dbReference type="Pfam" id="PF14639">
    <property type="entry name" value="YqgF"/>
    <property type="match status" value="1"/>
</dbReference>
<dbReference type="PIRSF" id="PIRSF036947">
    <property type="entry name" value="Spt6"/>
    <property type="match status" value="1"/>
</dbReference>
<dbReference type="SMART" id="SM00316">
    <property type="entry name" value="S1"/>
    <property type="match status" value="1"/>
</dbReference>
<dbReference type="SMART" id="SM00252">
    <property type="entry name" value="SH2"/>
    <property type="match status" value="1"/>
</dbReference>
<dbReference type="SMART" id="SM00732">
    <property type="entry name" value="YqgFc"/>
    <property type="match status" value="1"/>
</dbReference>
<dbReference type="SUPFAM" id="SSF50249">
    <property type="entry name" value="Nucleic acid-binding proteins"/>
    <property type="match status" value="1"/>
</dbReference>
<dbReference type="SUPFAM" id="SSF53098">
    <property type="entry name" value="Ribonuclease H-like"/>
    <property type="match status" value="1"/>
</dbReference>
<dbReference type="SUPFAM" id="SSF47781">
    <property type="entry name" value="RuvA domain 2-like"/>
    <property type="match status" value="2"/>
</dbReference>
<dbReference type="SUPFAM" id="SSF55550">
    <property type="entry name" value="SH2 domain"/>
    <property type="match status" value="1"/>
</dbReference>
<dbReference type="SUPFAM" id="SSF158832">
    <property type="entry name" value="Tex N-terminal region-like"/>
    <property type="match status" value="1"/>
</dbReference>
<dbReference type="PROSITE" id="PS50126">
    <property type="entry name" value="S1"/>
    <property type="match status" value="1"/>
</dbReference>
<dbReference type="PROSITE" id="PS50001">
    <property type="entry name" value="SH2"/>
    <property type="match status" value="1"/>
</dbReference>
<keyword id="KW-0007">Acetylation</keyword>
<keyword id="KW-0143">Chaperone</keyword>
<keyword id="KW-0175">Coiled coil</keyword>
<keyword id="KW-0507">mRNA processing</keyword>
<keyword id="KW-0508">mRNA splicing</keyword>
<keyword id="KW-0509">mRNA transport</keyword>
<keyword id="KW-0539">Nucleus</keyword>
<keyword id="KW-0597">Phosphoprotein</keyword>
<keyword id="KW-1185">Reference proteome</keyword>
<keyword id="KW-0804">Transcription</keyword>
<keyword id="KW-0813">Transport</keyword>
<name>SPT6H_MOUSE</name>
<sequence>MSDFVESEAEESEEEYNHEGEVVPRVTKKFVEEEDDDEEEEEENLDDQDERGNLKDFINDDDDEEEGEEDEGSDSGDSEDDVGHKKRKRPSFDDRLEDDDFDLIEENLGVKVKRGQKYRRVKKMSDDDEDDEEEYGKEEHEKEAIAGEIFQDEEGEEGQEAVEAPMAPPDEEEEDDEESDIDDFIVDDDGQPLKKPKWRKKLPGYTDAALQEAQEIFGVDFDYDEFEKYNEYDEELEEDYEYEDDETEGEIRVRPKKTTKKRVSRRSIFEMYEPSELESSHLTDQDNEIRATDLPERFQLRSIPVKAAEDDELEEEADWIYRNAFATPTISLQDSCDYLDRGQPTSSFSRKGPSTVQKIKEALGFMRNQHFEVPFIAFYRKEYVEPELHINDLWRVWQWDEKWTQLRIRKENLTRLFEKMQAYQYEQISADPDKPLADGIRALDTTDMERLKDVQSMDELKDVYNHFLLYYGRDIPKMQNAAKASRKKLKRIKEDGDEEGEGEEAEDEEQRGPELKQASRRDMYTICQSAGLDGLAKKFGLTPEQFGENLRDSYQRHETEQFPAEPLELAKDYVCSQFPTPEAVLEGARYMVALQIAREPLVRQVLRQTFQERAKLNITPTKKGRKDVDEAHYAYSFKYLKNKPVKELRDDQFLKIGLAEDEGLLTIDISIDMKGVEGYGNDQTYFEEIKQFYYRDEFSHQVQEWNRQRTMAIERALQQFLYVQMAKELKNKLLAEARESVVKACSRKLYNWLRVAPYRPDQQVEEDDDFMDENQGKGIRVLGIAFSSARDHPVFCALVNGEGEVTDFLRLPHFTKRRTAWREEEREKKAQDIETLKKFLVNKKPHVVTIAGENRDAQMLTEDVKRIVHELDQGQQLSSIGVELVDNELAILYMNSKKSEAEFRDYPPVLRQAVSLARRIQDPLIEFAQVCSSDEDILCLKFHPLQEHVVKEELLNALYCEFINRVNEVGVDVNRAIAHPYSQALIQYVCGLGPRKGTHLLKILKQNNTRLESRTQLVTMCHMGPKVFMNCAGFLKIDTASLGDSTDSYIEVLDGSRVHPETYEWARKMAVDALEYDESAEDANPAGALEEILENPERLKDLDLDAFAEELERQGYGDKHITLYDIRAELSCRYKDLRTAYRSPNTEEIFNMLTKETPETFYIGKLIICNVTGIAHRRPQGESYDQAIRNDETGLWQCPFCQQDNFPELSEVWNHFDSGSCPGQAIGVKTRLDNGVTGFIPTKFLSDKVVKRPEERVKVGMTVHCRIMKIDIEKFSADLTCRTSDLMDRNNEWKLPKDTYYDFDAEAADHKQEEDMKRKQQRTTYIKRVIAHPSFHNINFKQAEKMMETMDQGDVIIRPSSKGENHLTVTWKVSAGIYQHVDVREEGKENAFSLGATLWINSEEFEDLDEIVARYVQPMASFARDLLNHKYYQDCSGGDRKKLEELLIKTKKEKPTFIPYFICACKELPGKFLLGYQPRGKPRIEYVTVTPEGFRYRGQIFPTVNGLFRWFKDHYQDPVPGITPSSSNRTRTPASINATPANINLADLTRAVNALPQNMTSQMFSAIAAVTGQGQNPNATPAQWASSQYGYGGSGGGSSAYHVFPTPAQQPVATPLMTPSYSYTTPSQPITTPQYHQLQASTTPQSTQAQPQPSSSSRQRQQQPKSNSHAAIDWGKMAEQWLQEKEAERRKQKQRLTPRPSPSPMIESTPMSIAGDATPLLDEMDR</sequence>
<protein>
    <recommendedName>
        <fullName>Transcription elongation factor SPT6</fullName>
    </recommendedName>
</protein>
<comment type="function">
    <text evidence="7 9 10 11">Histone H3-H4 chaperone that plays a key role in the regulation of transcription elongation and mRNA processing. Enhances the transcription elongation by RNA polymerase II (RNAPII) and is also required for the efficient activation of transcriptional elongation by the HIV-1 nuclear transcriptional activator, Tat. Besides chaperoning histones in transcription, acts to transport and splice mRNA by forming a complex with IWS1 and the C-terminal domain (CTD) of the RNAPII subunit RPB1 (POLR2A). The SUPT6H:IWS1:CTD complex recruits mRNA export factors (ALYREF/THOC4, EXOSC10) as well as histone modifying enzymes (such as SETD2), to ensure proper mRNA splicing, efficient mRNA export and elongation-coupled H3K36 methylation, a signature chromatin mark of active transcription. SUPT6H via its association with SETD1A, regulates both class-switch recombination and somatic hypermutation through formation of H3K4me3 epigenetic marks on activation-induced cytidine deaminase (AICDA) target loci. Promotes the activation of the myogenic gene program by entailing erasure of the repressive H3K27me3 epigenetic mark through stabilization of the chromatin interaction of the H3K27 demethylase KDM6A.</text>
</comment>
<comment type="subunit">
    <text evidence="1 7 8 9 10 11 12">Interacts with RNA polymerase II and the DRB sensitivity-inducing factor complex (DSIF complex), which is composed of SUPT5H and SUPT4H1 or SUPT4H2 (By similarity). Interacts with PAAF1 (By similarity). Interacts with histone H2B and H3 (By similarity). Interacts (via SH2 domain) with POLR2A phosphorylated at 'Ser-2'. Interacts (via SH2 domain) with SETD1A. Interacts with IWS1, KDM6A and AICDA. Interacts with WDR43 (PubMed:31128943).</text>
</comment>
<comment type="subcellular location">
    <subcellularLocation>
        <location evidence="13">Nucleus</location>
    </subcellularLocation>
</comment>
<comment type="tissue specificity">
    <text>Ubiquitously expressed.</text>
</comment>
<comment type="PTM">
    <text evidence="2">Dephosphorylated at Ser-1530 by the PNUTS-PP1 complex during RNA polymerase II transcription pause-release.</text>
</comment>
<comment type="similarity">
    <text evidence="13">Belongs to the SPT6 family.</text>
</comment>
<feature type="initiator methionine" description="Removed" evidence="2">
    <location>
        <position position="1"/>
    </location>
</feature>
<feature type="chain" id="PRO_0000072172" description="Transcription elongation factor SPT6">
    <location>
        <begin position="2"/>
        <end position="1726"/>
    </location>
</feature>
<feature type="domain" description="S1 motif" evidence="4">
    <location>
        <begin position="1213"/>
        <end position="1282"/>
    </location>
</feature>
<feature type="domain" description="SH2" evidence="5">
    <location>
        <begin position="1325"/>
        <end position="1431"/>
    </location>
</feature>
<feature type="region of interest" description="Disordered" evidence="6">
    <location>
        <begin position="1"/>
        <end position="197"/>
    </location>
</feature>
<feature type="region of interest" description="Interaction with PAAF1" evidence="1">
    <location>
        <begin position="2"/>
        <end position="916"/>
    </location>
</feature>
<feature type="region of interest" description="Interaction with IWS1">
    <location>
        <begin position="2"/>
        <end position="485"/>
    </location>
</feature>
<feature type="region of interest" description="Interaction with KDM6A" evidence="11">
    <location>
        <begin position="317"/>
        <end position="1300"/>
    </location>
</feature>
<feature type="region of interest" description="Disordered" evidence="6">
    <location>
        <begin position="489"/>
        <end position="520"/>
    </location>
</feature>
<feature type="region of interest" description="Interaction with histone H2B and H3" evidence="1">
    <location>
        <begin position="1633"/>
        <end position="1726"/>
    </location>
</feature>
<feature type="region of interest" description="Disordered" evidence="6">
    <location>
        <begin position="1636"/>
        <end position="1726"/>
    </location>
</feature>
<feature type="coiled-coil region" evidence="3">
    <location>
        <begin position="3"/>
        <end position="51"/>
    </location>
</feature>
<feature type="compositionally biased region" description="Acidic residues" evidence="6">
    <location>
        <begin position="1"/>
        <end position="14"/>
    </location>
</feature>
<feature type="compositionally biased region" description="Acidic residues" evidence="6">
    <location>
        <begin position="32"/>
        <end position="49"/>
    </location>
</feature>
<feature type="compositionally biased region" description="Acidic residues" evidence="6">
    <location>
        <begin position="59"/>
        <end position="80"/>
    </location>
</feature>
<feature type="compositionally biased region" description="Acidic residues" evidence="6">
    <location>
        <begin position="95"/>
        <end position="105"/>
    </location>
</feature>
<feature type="compositionally biased region" description="Basic residues" evidence="6">
    <location>
        <begin position="111"/>
        <end position="122"/>
    </location>
</feature>
<feature type="compositionally biased region" description="Acidic residues" evidence="6">
    <location>
        <begin position="126"/>
        <end position="136"/>
    </location>
</feature>
<feature type="compositionally biased region" description="Acidic residues" evidence="6">
    <location>
        <begin position="150"/>
        <end position="160"/>
    </location>
</feature>
<feature type="compositionally biased region" description="Acidic residues" evidence="6">
    <location>
        <begin position="169"/>
        <end position="190"/>
    </location>
</feature>
<feature type="compositionally biased region" description="Acidic residues" evidence="6">
    <location>
        <begin position="495"/>
        <end position="509"/>
    </location>
</feature>
<feature type="compositionally biased region" description="Basic and acidic residues" evidence="6">
    <location>
        <begin position="510"/>
        <end position="520"/>
    </location>
</feature>
<feature type="compositionally biased region" description="Low complexity" evidence="6">
    <location>
        <begin position="1639"/>
        <end position="1664"/>
    </location>
</feature>
<feature type="modified residue" description="N-acetylserine" evidence="2">
    <location>
        <position position="2"/>
    </location>
</feature>
<feature type="modified residue" description="Phosphoserine" evidence="2">
    <location>
        <position position="7"/>
    </location>
</feature>
<feature type="modified residue" description="Phosphoserine" evidence="2">
    <location>
        <position position="12"/>
    </location>
</feature>
<feature type="modified residue" description="Phosphoserine" evidence="14">
    <location>
        <position position="73"/>
    </location>
</feature>
<feature type="modified residue" description="Phosphoserine" evidence="14">
    <location>
        <position position="78"/>
    </location>
</feature>
<feature type="modified residue" description="Phosphoserine" evidence="14">
    <location>
        <position position="91"/>
    </location>
</feature>
<feature type="modified residue" description="Phosphoserine" evidence="14">
    <location>
        <position position="125"/>
    </location>
</feature>
<feature type="modified residue" description="Phosphoserine" evidence="2">
    <location>
        <position position="267"/>
    </location>
</feature>
<feature type="modified residue" description="N6-acetyllysine" evidence="2">
    <location>
        <position position="743"/>
    </location>
</feature>
<feature type="modified residue" description="Phosphotyrosine" evidence="2">
    <location>
        <position position="1515"/>
    </location>
</feature>
<feature type="modified residue" description="Phosphothreonine" evidence="2">
    <location>
        <position position="1523"/>
    </location>
</feature>
<feature type="modified residue" description="Phosphoserine" evidence="2">
    <location>
        <position position="1526"/>
    </location>
</feature>
<feature type="modified residue" description="Phosphothreonine" evidence="2">
    <location>
        <position position="1530"/>
    </location>
</feature>
<feature type="modified residue" description="Phosphothreonine" evidence="14">
    <location>
        <position position="1532"/>
    </location>
</feature>
<feature type="modified residue" description="Phosphoserine" evidence="14">
    <location>
        <position position="1535"/>
    </location>
</feature>
<feature type="modified residue" description="Phosphothreonine" evidence="14">
    <location>
        <position position="1539"/>
    </location>
</feature>
<feature type="modified residue" description="N6-acetyllysine" evidence="2">
    <location>
        <position position="1676"/>
    </location>
</feature>
<feature type="modified residue" description="Phosphothreonine" evidence="2">
    <location>
        <position position="1697"/>
    </location>
</feature>
<feature type="modified residue" description="Phosphoserine" evidence="14">
    <location>
        <position position="1701"/>
    </location>
</feature>
<feature type="modified residue" description="Phosphoserine" evidence="14">
    <location>
        <position position="1703"/>
    </location>
</feature>
<feature type="modified residue" description="Phosphothreonine" evidence="14">
    <location>
        <position position="1709"/>
    </location>
</feature>
<feature type="modified residue" description="Phosphothreonine" evidence="14">
    <location>
        <position position="1718"/>
    </location>
</feature>
<feature type="mutagenesis site" description="Loss of binding to POLR2A. Retains the ability to support transcription elongation but the resulting transcripts contain splicing defects and accumulate to high levels within the nucleus." evidence="7">
    <original>R</original>
    <variation>K</variation>
    <location>
        <position position="1358"/>
    </location>
</feature>
<feature type="sequence conflict" description="In Ref. 1; AAB18950." evidence="13" ref="1">
    <original>T</original>
    <variation>A</variation>
    <location>
        <position position="609"/>
    </location>
</feature>
<feature type="sequence conflict" description="In Ref. 5; BAC32616." evidence="13" ref="5">
    <original>P</original>
    <variation>Q</variation>
    <location>
        <position position="1520"/>
    </location>
</feature>